<protein>
    <recommendedName>
        <fullName evidence="1">Ribosome maturation factor RimP</fullName>
    </recommendedName>
</protein>
<gene>
    <name evidence="1" type="primary">rimP</name>
    <name type="ordered locus">Avin_42840</name>
</gene>
<dbReference type="EMBL" id="CP001157">
    <property type="protein sequence ID" value="ACO80407.1"/>
    <property type="molecule type" value="Genomic_DNA"/>
</dbReference>
<dbReference type="SMR" id="C1DFL1"/>
<dbReference type="STRING" id="322710.Avin_42840"/>
<dbReference type="EnsemblBacteria" id="ACO80407">
    <property type="protein sequence ID" value="ACO80407"/>
    <property type="gene ID" value="Avin_42840"/>
</dbReference>
<dbReference type="KEGG" id="avn:Avin_42840"/>
<dbReference type="eggNOG" id="COG0779">
    <property type="taxonomic scope" value="Bacteria"/>
</dbReference>
<dbReference type="HOGENOM" id="CLU_070525_1_1_6"/>
<dbReference type="Proteomes" id="UP000002424">
    <property type="component" value="Chromosome"/>
</dbReference>
<dbReference type="GO" id="GO:0005829">
    <property type="term" value="C:cytosol"/>
    <property type="evidence" value="ECO:0007669"/>
    <property type="project" value="TreeGrafter"/>
</dbReference>
<dbReference type="GO" id="GO:0000028">
    <property type="term" value="P:ribosomal small subunit assembly"/>
    <property type="evidence" value="ECO:0007669"/>
    <property type="project" value="TreeGrafter"/>
</dbReference>
<dbReference type="GO" id="GO:0006412">
    <property type="term" value="P:translation"/>
    <property type="evidence" value="ECO:0007669"/>
    <property type="project" value="TreeGrafter"/>
</dbReference>
<dbReference type="CDD" id="cd01734">
    <property type="entry name" value="YlxS_C"/>
    <property type="match status" value="1"/>
</dbReference>
<dbReference type="FunFam" id="3.30.300.70:FF:000001">
    <property type="entry name" value="Ribosome maturation factor RimP"/>
    <property type="match status" value="1"/>
</dbReference>
<dbReference type="Gene3D" id="2.30.30.180">
    <property type="entry name" value="Ribosome maturation factor RimP, C-terminal domain"/>
    <property type="match status" value="1"/>
</dbReference>
<dbReference type="Gene3D" id="3.30.300.70">
    <property type="entry name" value="RimP-like superfamily, N-terminal"/>
    <property type="match status" value="1"/>
</dbReference>
<dbReference type="HAMAP" id="MF_01077">
    <property type="entry name" value="RimP"/>
    <property type="match status" value="1"/>
</dbReference>
<dbReference type="InterPro" id="IPR003728">
    <property type="entry name" value="Ribosome_maturation_RimP"/>
</dbReference>
<dbReference type="InterPro" id="IPR028998">
    <property type="entry name" value="RimP_C"/>
</dbReference>
<dbReference type="InterPro" id="IPR036847">
    <property type="entry name" value="RimP_C_sf"/>
</dbReference>
<dbReference type="InterPro" id="IPR028989">
    <property type="entry name" value="RimP_N"/>
</dbReference>
<dbReference type="InterPro" id="IPR035956">
    <property type="entry name" value="RimP_N_sf"/>
</dbReference>
<dbReference type="NCBIfam" id="NF000927">
    <property type="entry name" value="PRK00092.1-1"/>
    <property type="match status" value="1"/>
</dbReference>
<dbReference type="PANTHER" id="PTHR33867">
    <property type="entry name" value="RIBOSOME MATURATION FACTOR RIMP"/>
    <property type="match status" value="1"/>
</dbReference>
<dbReference type="PANTHER" id="PTHR33867:SF1">
    <property type="entry name" value="RIBOSOME MATURATION FACTOR RIMP"/>
    <property type="match status" value="1"/>
</dbReference>
<dbReference type="Pfam" id="PF17384">
    <property type="entry name" value="DUF150_C"/>
    <property type="match status" value="1"/>
</dbReference>
<dbReference type="Pfam" id="PF02576">
    <property type="entry name" value="RimP_N"/>
    <property type="match status" value="1"/>
</dbReference>
<dbReference type="SUPFAM" id="SSF74942">
    <property type="entry name" value="YhbC-like, C-terminal domain"/>
    <property type="match status" value="1"/>
</dbReference>
<dbReference type="SUPFAM" id="SSF75420">
    <property type="entry name" value="YhbC-like, N-terminal domain"/>
    <property type="match status" value="1"/>
</dbReference>
<proteinExistence type="inferred from homology"/>
<reference key="1">
    <citation type="journal article" date="2009" name="J. Bacteriol.">
        <title>Genome sequence of Azotobacter vinelandii, an obligate aerobe specialized to support diverse anaerobic metabolic processes.</title>
        <authorList>
            <person name="Setubal J.C."/>
            <person name="Dos Santos P."/>
            <person name="Goldman B.S."/>
            <person name="Ertesvaag H."/>
            <person name="Espin G."/>
            <person name="Rubio L.M."/>
            <person name="Valla S."/>
            <person name="Almeida N.F."/>
            <person name="Balasubramanian D."/>
            <person name="Cromes L."/>
            <person name="Curatti L."/>
            <person name="Du Z."/>
            <person name="Godsy E."/>
            <person name="Goodner B."/>
            <person name="Hellner-Burris K."/>
            <person name="Hernandez J.A."/>
            <person name="Houmiel K."/>
            <person name="Imperial J."/>
            <person name="Kennedy C."/>
            <person name="Larson T.J."/>
            <person name="Latreille P."/>
            <person name="Ligon L.S."/>
            <person name="Lu J."/>
            <person name="Maerk M."/>
            <person name="Miller N.M."/>
            <person name="Norton S."/>
            <person name="O'Carroll I.P."/>
            <person name="Paulsen I."/>
            <person name="Raulfs E.C."/>
            <person name="Roemer R."/>
            <person name="Rosser J."/>
            <person name="Segura D."/>
            <person name="Slater S."/>
            <person name="Stricklin S.L."/>
            <person name="Studholme D.J."/>
            <person name="Sun J."/>
            <person name="Viana C.J."/>
            <person name="Wallin E."/>
            <person name="Wang B."/>
            <person name="Wheeler C."/>
            <person name="Zhu H."/>
            <person name="Dean D.R."/>
            <person name="Dixon R."/>
            <person name="Wood D."/>
        </authorList>
    </citation>
    <scope>NUCLEOTIDE SEQUENCE [LARGE SCALE GENOMIC DNA]</scope>
    <source>
        <strain>DJ / ATCC BAA-1303</strain>
    </source>
</reference>
<sequence>MQALLAPVVEALGYECWGIEFLSQGRHSLLRVYIDHADGILIDDCEKVSRQISGVLDVEDPISSEYTLEVSSPGMDRPLFTLEQFVRCAGEQVKIRLRSPFEGRRNFQGLLRGVEDQDVVVLVDDHEYLLPIDLIDKANIIPRFD</sequence>
<keyword id="KW-0963">Cytoplasm</keyword>
<keyword id="KW-0690">Ribosome biogenesis</keyword>
<feature type="chain" id="PRO_0000384609" description="Ribosome maturation factor RimP">
    <location>
        <begin position="1"/>
        <end position="145"/>
    </location>
</feature>
<comment type="function">
    <text evidence="1">Required for maturation of 30S ribosomal subunits.</text>
</comment>
<comment type="subcellular location">
    <subcellularLocation>
        <location evidence="1">Cytoplasm</location>
    </subcellularLocation>
</comment>
<comment type="similarity">
    <text evidence="1">Belongs to the RimP family.</text>
</comment>
<accession>C1DFL1</accession>
<evidence type="ECO:0000255" key="1">
    <source>
        <dbReference type="HAMAP-Rule" id="MF_01077"/>
    </source>
</evidence>
<organism>
    <name type="scientific">Azotobacter vinelandii (strain DJ / ATCC BAA-1303)</name>
    <dbReference type="NCBI Taxonomy" id="322710"/>
    <lineage>
        <taxon>Bacteria</taxon>
        <taxon>Pseudomonadati</taxon>
        <taxon>Pseudomonadota</taxon>
        <taxon>Gammaproteobacteria</taxon>
        <taxon>Pseudomonadales</taxon>
        <taxon>Pseudomonadaceae</taxon>
        <taxon>Azotobacter</taxon>
    </lineage>
</organism>
<name>RIMP_AZOVD</name>